<comment type="function">
    <text evidence="1">Catalyzes the hydrolysis of UDP-3-O-myristoyl-N-acetylglucosamine to form UDP-3-O-myristoylglucosamine and acetate, the committed step in lipid A biosynthesis.</text>
</comment>
<comment type="catalytic activity">
    <reaction evidence="1">
        <text>a UDP-3-O-[(3R)-3-hydroxyacyl]-N-acetyl-alpha-D-glucosamine + H2O = a UDP-3-O-[(3R)-3-hydroxyacyl]-alpha-D-glucosamine + acetate</text>
        <dbReference type="Rhea" id="RHEA:67816"/>
        <dbReference type="ChEBI" id="CHEBI:15377"/>
        <dbReference type="ChEBI" id="CHEBI:30089"/>
        <dbReference type="ChEBI" id="CHEBI:137740"/>
        <dbReference type="ChEBI" id="CHEBI:173225"/>
        <dbReference type="EC" id="3.5.1.108"/>
    </reaction>
</comment>
<comment type="cofactor">
    <cofactor evidence="1">
        <name>Zn(2+)</name>
        <dbReference type="ChEBI" id="CHEBI:29105"/>
    </cofactor>
</comment>
<comment type="pathway">
    <text evidence="1">Glycolipid biosynthesis; lipid IV(A) biosynthesis; lipid IV(A) from (3R)-3-hydroxytetradecanoyl-[acyl-carrier-protein] and UDP-N-acetyl-alpha-D-glucosamine: step 2/6.</text>
</comment>
<comment type="similarity">
    <text evidence="1">Belongs to the LpxC family.</text>
</comment>
<evidence type="ECO:0000255" key="1">
    <source>
        <dbReference type="HAMAP-Rule" id="MF_00388"/>
    </source>
</evidence>
<proteinExistence type="inferred from homology"/>
<accession>A6VQM7</accession>
<name>LPXC_ACTSZ</name>
<protein>
    <recommendedName>
        <fullName evidence="1">UDP-3-O-acyl-N-acetylglucosamine deacetylase</fullName>
        <shortName evidence="1">UDP-3-O-acyl-GlcNAc deacetylase</shortName>
        <ecNumber evidence="1">3.5.1.108</ecNumber>
    </recommendedName>
    <alternativeName>
        <fullName evidence="1">UDP-3-O-[R-3-hydroxymyristoyl]-N-acetylglucosamine deacetylase</fullName>
    </alternativeName>
</protein>
<keyword id="KW-0378">Hydrolase</keyword>
<keyword id="KW-0441">Lipid A biosynthesis</keyword>
<keyword id="KW-0444">Lipid biosynthesis</keyword>
<keyword id="KW-0443">Lipid metabolism</keyword>
<keyword id="KW-0479">Metal-binding</keyword>
<keyword id="KW-1185">Reference proteome</keyword>
<keyword id="KW-0862">Zinc</keyword>
<feature type="chain" id="PRO_1000072209" description="UDP-3-O-acyl-N-acetylglucosamine deacetylase">
    <location>
        <begin position="1"/>
        <end position="305"/>
    </location>
</feature>
<feature type="active site" description="Proton donor" evidence="1">
    <location>
        <position position="265"/>
    </location>
</feature>
<feature type="binding site" evidence="1">
    <location>
        <position position="79"/>
    </location>
    <ligand>
        <name>Zn(2+)</name>
        <dbReference type="ChEBI" id="CHEBI:29105"/>
    </ligand>
</feature>
<feature type="binding site" evidence="1">
    <location>
        <position position="238"/>
    </location>
    <ligand>
        <name>Zn(2+)</name>
        <dbReference type="ChEBI" id="CHEBI:29105"/>
    </ligand>
</feature>
<feature type="binding site" evidence="1">
    <location>
        <position position="242"/>
    </location>
    <ligand>
        <name>Zn(2+)</name>
        <dbReference type="ChEBI" id="CHEBI:29105"/>
    </ligand>
</feature>
<reference key="1">
    <citation type="journal article" date="2010" name="BMC Genomics">
        <title>A genomic perspective on the potential of Actinobacillus succinogenes for industrial succinate production.</title>
        <authorList>
            <person name="McKinlay J.B."/>
            <person name="Laivenieks M."/>
            <person name="Schindler B.D."/>
            <person name="McKinlay A.A."/>
            <person name="Siddaramappa S."/>
            <person name="Challacombe J.F."/>
            <person name="Lowry S.R."/>
            <person name="Clum A."/>
            <person name="Lapidus A.L."/>
            <person name="Burkhart K.B."/>
            <person name="Harkins V."/>
            <person name="Vieille C."/>
        </authorList>
    </citation>
    <scope>NUCLEOTIDE SEQUENCE [LARGE SCALE GENOMIC DNA]</scope>
    <source>
        <strain>ATCC 55618 / DSM 22257 / CCUG 43843 / 130Z</strain>
    </source>
</reference>
<sequence length="305" mass="33917">MIKQRTLKQGIKVTGVGLHSGNKVTLNLRPAAANTGVVYCRTDLNPPVSFPADAKAVRDTMLCTALVNDEGVRISTVEHLNAALAGLGIDNIIIEVDAPEIPIMDGSASPFVYLLLDAGIEEQDAPKKFIRVKKKVRVEDGDKWAEILPYNGFRLNFTIDFNHPAITKNLSTYTLDFSAQKFVQQISRARTFAFMKDIEYLQSQGLALGGSLDNAIVLDNYRVLNEEGLRFKDELVRHKMLDSIGDLFMCGYNMIGEFKAYKSGHGLNNKLLRALLEDQEAWEFATFEDKEKVPQGYTVGAQVLI</sequence>
<dbReference type="EC" id="3.5.1.108" evidence="1"/>
<dbReference type="EMBL" id="CP000746">
    <property type="protein sequence ID" value="ABR75274.1"/>
    <property type="molecule type" value="Genomic_DNA"/>
</dbReference>
<dbReference type="RefSeq" id="WP_012073651.1">
    <property type="nucleotide sequence ID" value="NC_009655.1"/>
</dbReference>
<dbReference type="SMR" id="A6VQM7"/>
<dbReference type="STRING" id="339671.Asuc_1926"/>
<dbReference type="KEGG" id="asu:Asuc_1926"/>
<dbReference type="eggNOG" id="COG0774">
    <property type="taxonomic scope" value="Bacteria"/>
</dbReference>
<dbReference type="HOGENOM" id="CLU_046528_1_0_6"/>
<dbReference type="OrthoDB" id="9802746at2"/>
<dbReference type="UniPathway" id="UPA00359">
    <property type="reaction ID" value="UER00478"/>
</dbReference>
<dbReference type="Proteomes" id="UP000001114">
    <property type="component" value="Chromosome"/>
</dbReference>
<dbReference type="GO" id="GO:0016020">
    <property type="term" value="C:membrane"/>
    <property type="evidence" value="ECO:0007669"/>
    <property type="project" value="GOC"/>
</dbReference>
<dbReference type="GO" id="GO:0046872">
    <property type="term" value="F:metal ion binding"/>
    <property type="evidence" value="ECO:0007669"/>
    <property type="project" value="UniProtKB-KW"/>
</dbReference>
<dbReference type="GO" id="GO:0103117">
    <property type="term" value="F:UDP-3-O-acyl-N-acetylglucosamine deacetylase activity"/>
    <property type="evidence" value="ECO:0007669"/>
    <property type="project" value="UniProtKB-UniRule"/>
</dbReference>
<dbReference type="GO" id="GO:0009245">
    <property type="term" value="P:lipid A biosynthetic process"/>
    <property type="evidence" value="ECO:0007669"/>
    <property type="project" value="UniProtKB-UniRule"/>
</dbReference>
<dbReference type="FunFam" id="3.30.230.20:FF:000001">
    <property type="entry name" value="UDP-3-O-acyl-N-acetylglucosamine deacetylase"/>
    <property type="match status" value="1"/>
</dbReference>
<dbReference type="Gene3D" id="3.30.230.20">
    <property type="entry name" value="lpxc deacetylase, domain 1"/>
    <property type="match status" value="1"/>
</dbReference>
<dbReference type="Gene3D" id="3.30.1700.10">
    <property type="entry name" value="lpxc deacetylase, domain 2"/>
    <property type="match status" value="1"/>
</dbReference>
<dbReference type="HAMAP" id="MF_00388">
    <property type="entry name" value="LpxC"/>
    <property type="match status" value="1"/>
</dbReference>
<dbReference type="InterPro" id="IPR020568">
    <property type="entry name" value="Ribosomal_Su5_D2-typ_SF"/>
</dbReference>
<dbReference type="InterPro" id="IPR004463">
    <property type="entry name" value="UDP-acyl_GlcNac_deAcase"/>
</dbReference>
<dbReference type="InterPro" id="IPR011334">
    <property type="entry name" value="UDP-acyl_GlcNac_deAcase_C"/>
</dbReference>
<dbReference type="InterPro" id="IPR015870">
    <property type="entry name" value="UDP-acyl_N-AcGlcN_deAcase_N"/>
</dbReference>
<dbReference type="NCBIfam" id="TIGR00325">
    <property type="entry name" value="lpxC"/>
    <property type="match status" value="1"/>
</dbReference>
<dbReference type="PANTHER" id="PTHR33694">
    <property type="entry name" value="UDP-3-O-ACYL-N-ACETYLGLUCOSAMINE DEACETYLASE 1, MITOCHONDRIAL-RELATED"/>
    <property type="match status" value="1"/>
</dbReference>
<dbReference type="PANTHER" id="PTHR33694:SF1">
    <property type="entry name" value="UDP-3-O-ACYL-N-ACETYLGLUCOSAMINE DEACETYLASE 1, MITOCHONDRIAL-RELATED"/>
    <property type="match status" value="1"/>
</dbReference>
<dbReference type="Pfam" id="PF03331">
    <property type="entry name" value="LpxC"/>
    <property type="match status" value="1"/>
</dbReference>
<dbReference type="SUPFAM" id="SSF54211">
    <property type="entry name" value="Ribosomal protein S5 domain 2-like"/>
    <property type="match status" value="2"/>
</dbReference>
<gene>
    <name evidence="1" type="primary">lpxC</name>
    <name type="ordered locus">Asuc_1926</name>
</gene>
<organism>
    <name type="scientific">Actinobacillus succinogenes (strain ATCC 55618 / DSM 22257 / CCUG 43843 / 130Z)</name>
    <dbReference type="NCBI Taxonomy" id="339671"/>
    <lineage>
        <taxon>Bacteria</taxon>
        <taxon>Pseudomonadati</taxon>
        <taxon>Pseudomonadota</taxon>
        <taxon>Gammaproteobacteria</taxon>
        <taxon>Pasteurellales</taxon>
        <taxon>Pasteurellaceae</taxon>
        <taxon>Actinobacillus</taxon>
    </lineage>
</organism>